<name>ORC1_KLULA</name>
<evidence type="ECO:0000250" key="1"/>
<evidence type="ECO:0000250" key="2">
    <source>
        <dbReference type="UniProtKB" id="Q13415"/>
    </source>
</evidence>
<evidence type="ECO:0000250" key="3">
    <source>
        <dbReference type="UniProtKB" id="Q9Z1N2"/>
    </source>
</evidence>
<evidence type="ECO:0000255" key="4">
    <source>
        <dbReference type="PROSITE-ProRule" id="PRU00370"/>
    </source>
</evidence>
<evidence type="ECO:0000256" key="5">
    <source>
        <dbReference type="SAM" id="MobiDB-lite"/>
    </source>
</evidence>
<evidence type="ECO:0000305" key="6"/>
<comment type="function">
    <text evidence="1">Component of the origin recognition complex (ORC) that binds origins of replication. It has a role in both chromosomal replication and mating type transcriptional silencing. Binds to the ARS consensus sequence (ACS) of origins of replication in an ATP-dependent manner (By similarity).</text>
</comment>
<comment type="subunit">
    <text evidence="1">ORC is composed of six subunits.</text>
</comment>
<comment type="subcellular location">
    <subcellularLocation>
        <location>Nucleus</location>
    </subcellularLocation>
</comment>
<comment type="similarity">
    <text evidence="6">Belongs to the ORC1 family.</text>
</comment>
<feature type="chain" id="PRO_0000127072" description="Origin recognition complex subunit 1">
    <location>
        <begin position="1"/>
        <end position="886"/>
    </location>
</feature>
<feature type="domain" description="BAH" evidence="4">
    <location>
        <begin position="50"/>
        <end position="192"/>
    </location>
</feature>
<feature type="region of interest" description="Disordered" evidence="5">
    <location>
        <begin position="276"/>
        <end position="309"/>
    </location>
</feature>
<feature type="compositionally biased region" description="Basic and acidic residues" evidence="5">
    <location>
        <begin position="284"/>
        <end position="293"/>
    </location>
</feature>
<feature type="compositionally biased region" description="Acidic residues" evidence="5">
    <location>
        <begin position="300"/>
        <end position="309"/>
    </location>
</feature>
<feature type="binding site" evidence="2">
    <location>
        <begin position="471"/>
        <end position="479"/>
    </location>
    <ligand>
        <name>ATP</name>
        <dbReference type="ChEBI" id="CHEBI:30616"/>
    </ligand>
</feature>
<feature type="binding site" evidence="2">
    <location>
        <position position="558"/>
    </location>
    <ligand>
        <name>Mg(2+)</name>
        <dbReference type="ChEBI" id="CHEBI:18420"/>
    </ligand>
</feature>
<feature type="binding site" evidence="2">
    <location>
        <position position="559"/>
    </location>
    <ligand>
        <name>ATP</name>
        <dbReference type="ChEBI" id="CHEBI:30616"/>
    </ligand>
</feature>
<feature type="binding site" evidence="2">
    <location>
        <position position="559"/>
    </location>
    <ligand>
        <name>Mg(2+)</name>
        <dbReference type="ChEBI" id="CHEBI:18420"/>
    </ligand>
</feature>
<feature type="binding site" evidence="2">
    <location>
        <position position="592"/>
    </location>
    <ligand>
        <name>ATP</name>
        <dbReference type="ChEBI" id="CHEBI:30616"/>
    </ligand>
</feature>
<feature type="binding site" evidence="2">
    <location>
        <position position="700"/>
    </location>
    <ligand>
        <name>ATP</name>
        <dbReference type="ChEBI" id="CHEBI:30616"/>
    </ligand>
</feature>
<feature type="site" description="Histone H4K20me2 binding" evidence="3">
    <location>
        <position position="101"/>
    </location>
</feature>
<feature type="sequence conflict" description="In Ref. 1; AAC49130." evidence="6" ref="1">
    <original>L</original>
    <variation>F</variation>
    <location>
        <position position="856"/>
    </location>
</feature>
<feature type="sequence conflict" description="In Ref. 1; AAC49130." evidence="6" ref="1">
    <original>EQ</original>
    <variation>DE</variation>
    <location>
        <begin position="874"/>
        <end position="875"/>
    </location>
</feature>
<feature type="sequence conflict" description="In Ref. 1; AAC49130." evidence="6" ref="1">
    <original>E</original>
    <variation>Q</variation>
    <location>
        <position position="881"/>
    </location>
</feature>
<accession>P54788</accession>
<accession>Q6CWD2</accession>
<proteinExistence type="inferred from homology"/>
<sequence>MASTLAEFEVQWEIQKTDLKGNLIAETPRRRRRGDATEHEVINLVRYDGVRLYPGVTIVCKVEGADELSAYMIHEVRLNTSNYVELWCLNYLSWYEINAAERYKQLDGEFYETNKEKGDKFFEETFASQSIKNELYLTAELSEIYLRDLQFVANIKNEKEYLDSVNEGKMDSNMFLCRSACLPSGTNLADLDIHFFEEKIRSSNPKVSLEYLRDITLPKLPKPLNKSKVHAREKVVATKLQSDNTPSKKSFQQTVSKTNAEVQRIASTIVNEKEAISDNESDLSEYHESKEEFANASSSDSDEEFEDYQSAEELAIVEPAKKKVRSIKPDIPISPVKSQTPLQPSAVHSSPRKFFKNNIVRAKKAYTPFSKRYKNPKDIPDLNDIFQRHNNDLDIAALEERFRTVSAKGKMETIFSKVKKQLNSRNSKEEIVKAADFDNYLPARENEFASIYLSLYSAIEAGTSTSIYIAGTPGVGKTLTVREVVKDLMTSADQKELPRFQYIEINGLKIVKASDSYEVFWQKISGEKLTSGAAMESLEFYFNKVPATKKRPIVVLLDELDALVSKSQDVMYNFFNWATYSNAKLIVVAVANTLDLPERHLGNKISSRIGFTRIMFTGYTHEELRTIINLRLKYLNESSFYVDPETGSSYMISPDSSTIETDEEEKRKDFSNYKRLKLRINPDAIEIASRKIASVSGDVRRALKVVKRAVEYAENDYLKRLRYERLVNSKKDTSGNGTGNEELQSVEIKHITKALNESSTSPEQQFISGLSFSGKLFLYALINLIKKKQTDVQLGDIVEEMRLLIDVNGNNKYILELKRILFQNDSVDTKEQLRAVSWDYILLQLLDAGVVVRQYLKNERLSTIKLNISMEDAEQCLHEDEMLKTF</sequence>
<keyword id="KW-0067">ATP-binding</keyword>
<keyword id="KW-0235">DNA replication</keyword>
<keyword id="KW-0238">DNA-binding</keyword>
<keyword id="KW-0460">Magnesium</keyword>
<keyword id="KW-0479">Metal-binding</keyword>
<keyword id="KW-0547">Nucleotide-binding</keyword>
<keyword id="KW-0539">Nucleus</keyword>
<keyword id="KW-1185">Reference proteome</keyword>
<reference key="1">
    <citation type="journal article" date="1995" name="Science">
        <title>Conserved initiator proteins in eukaryotes.</title>
        <authorList>
            <person name="Gavin K.A."/>
            <person name="Hidaka M."/>
            <person name="Stillman B.D."/>
        </authorList>
    </citation>
    <scope>NUCLEOTIDE SEQUENCE [GENOMIC DNA]</scope>
</reference>
<reference key="2">
    <citation type="journal article" date="2004" name="Nature">
        <title>Genome evolution in yeasts.</title>
        <authorList>
            <person name="Dujon B."/>
            <person name="Sherman D."/>
            <person name="Fischer G."/>
            <person name="Durrens P."/>
            <person name="Casaregola S."/>
            <person name="Lafontaine I."/>
            <person name="de Montigny J."/>
            <person name="Marck C."/>
            <person name="Neuveglise C."/>
            <person name="Talla E."/>
            <person name="Goffard N."/>
            <person name="Frangeul L."/>
            <person name="Aigle M."/>
            <person name="Anthouard V."/>
            <person name="Babour A."/>
            <person name="Barbe V."/>
            <person name="Barnay S."/>
            <person name="Blanchin S."/>
            <person name="Beckerich J.-M."/>
            <person name="Beyne E."/>
            <person name="Bleykasten C."/>
            <person name="Boisrame A."/>
            <person name="Boyer J."/>
            <person name="Cattolico L."/>
            <person name="Confanioleri F."/>
            <person name="de Daruvar A."/>
            <person name="Despons L."/>
            <person name="Fabre E."/>
            <person name="Fairhead C."/>
            <person name="Ferry-Dumazet H."/>
            <person name="Groppi A."/>
            <person name="Hantraye F."/>
            <person name="Hennequin C."/>
            <person name="Jauniaux N."/>
            <person name="Joyet P."/>
            <person name="Kachouri R."/>
            <person name="Kerrest A."/>
            <person name="Koszul R."/>
            <person name="Lemaire M."/>
            <person name="Lesur I."/>
            <person name="Ma L."/>
            <person name="Muller H."/>
            <person name="Nicaud J.-M."/>
            <person name="Nikolski M."/>
            <person name="Oztas S."/>
            <person name="Ozier-Kalogeropoulos O."/>
            <person name="Pellenz S."/>
            <person name="Potier S."/>
            <person name="Richard G.-F."/>
            <person name="Straub M.-L."/>
            <person name="Suleau A."/>
            <person name="Swennen D."/>
            <person name="Tekaia F."/>
            <person name="Wesolowski-Louvel M."/>
            <person name="Westhof E."/>
            <person name="Wirth B."/>
            <person name="Zeniou-Meyer M."/>
            <person name="Zivanovic Y."/>
            <person name="Bolotin-Fukuhara M."/>
            <person name="Thierry A."/>
            <person name="Bouchier C."/>
            <person name="Caudron B."/>
            <person name="Scarpelli C."/>
            <person name="Gaillardin C."/>
            <person name="Weissenbach J."/>
            <person name="Wincker P."/>
            <person name="Souciet J.-L."/>
        </authorList>
    </citation>
    <scope>NUCLEOTIDE SEQUENCE [LARGE SCALE GENOMIC DNA]</scope>
    <source>
        <strain>ATCC 8585 / CBS 2359 / DSM 70799 / NBRC 1267 / NRRL Y-1140 / WM37</strain>
    </source>
</reference>
<dbReference type="EMBL" id="U40151">
    <property type="protein sequence ID" value="AAC49130.1"/>
    <property type="molecule type" value="Genomic_DNA"/>
</dbReference>
<dbReference type="EMBL" id="CR382122">
    <property type="protein sequence ID" value="CAH02150.1"/>
    <property type="molecule type" value="Genomic_DNA"/>
</dbReference>
<dbReference type="RefSeq" id="XP_451757.1">
    <property type="nucleotide sequence ID" value="XM_451757.1"/>
</dbReference>
<dbReference type="SMR" id="P54788"/>
<dbReference type="FunCoup" id="P54788">
    <property type="interactions" value="489"/>
</dbReference>
<dbReference type="STRING" id="284590.P54788"/>
<dbReference type="PaxDb" id="284590-P54788"/>
<dbReference type="KEGG" id="kla:KLLA0_B05016g"/>
<dbReference type="eggNOG" id="KOG1514">
    <property type="taxonomic scope" value="Eukaryota"/>
</dbReference>
<dbReference type="HOGENOM" id="CLU_012774_1_1_1"/>
<dbReference type="InParanoid" id="P54788"/>
<dbReference type="Proteomes" id="UP000000598">
    <property type="component" value="Chromosome B"/>
</dbReference>
<dbReference type="GO" id="GO:0005664">
    <property type="term" value="C:nuclear origin of replication recognition complex"/>
    <property type="evidence" value="ECO:0007669"/>
    <property type="project" value="TreeGrafter"/>
</dbReference>
<dbReference type="GO" id="GO:0005524">
    <property type="term" value="F:ATP binding"/>
    <property type="evidence" value="ECO:0007669"/>
    <property type="project" value="UniProtKB-KW"/>
</dbReference>
<dbReference type="GO" id="GO:0016887">
    <property type="term" value="F:ATP hydrolysis activity"/>
    <property type="evidence" value="ECO:0007669"/>
    <property type="project" value="InterPro"/>
</dbReference>
<dbReference type="GO" id="GO:0003682">
    <property type="term" value="F:chromatin binding"/>
    <property type="evidence" value="ECO:0007669"/>
    <property type="project" value="InterPro"/>
</dbReference>
<dbReference type="GO" id="GO:0003688">
    <property type="term" value="F:DNA replication origin binding"/>
    <property type="evidence" value="ECO:0007669"/>
    <property type="project" value="TreeGrafter"/>
</dbReference>
<dbReference type="GO" id="GO:0046872">
    <property type="term" value="F:metal ion binding"/>
    <property type="evidence" value="ECO:0007669"/>
    <property type="project" value="UniProtKB-KW"/>
</dbReference>
<dbReference type="GO" id="GO:0006270">
    <property type="term" value="P:DNA replication initiation"/>
    <property type="evidence" value="ECO:0007669"/>
    <property type="project" value="TreeGrafter"/>
</dbReference>
<dbReference type="GO" id="GO:0033314">
    <property type="term" value="P:mitotic DNA replication checkpoint signaling"/>
    <property type="evidence" value="ECO:0007669"/>
    <property type="project" value="TreeGrafter"/>
</dbReference>
<dbReference type="CDD" id="cd00009">
    <property type="entry name" value="AAA"/>
    <property type="match status" value="1"/>
</dbReference>
<dbReference type="CDD" id="cd04720">
    <property type="entry name" value="BAH_Orc1p_Yeast"/>
    <property type="match status" value="1"/>
</dbReference>
<dbReference type="FunFam" id="3.40.50.300:FF:000199">
    <property type="entry name" value="Origin recognition complex subunit 1"/>
    <property type="match status" value="1"/>
</dbReference>
<dbReference type="Gene3D" id="1.10.8.60">
    <property type="match status" value="1"/>
</dbReference>
<dbReference type="Gene3D" id="2.30.30.490">
    <property type="match status" value="1"/>
</dbReference>
<dbReference type="Gene3D" id="3.40.50.300">
    <property type="entry name" value="P-loop containing nucleotide triphosphate hydrolases"/>
    <property type="match status" value="1"/>
</dbReference>
<dbReference type="InterPro" id="IPR003593">
    <property type="entry name" value="AAA+_ATPase"/>
</dbReference>
<dbReference type="InterPro" id="IPR041083">
    <property type="entry name" value="AAA_lid_10"/>
</dbReference>
<dbReference type="InterPro" id="IPR003959">
    <property type="entry name" value="ATPase_AAA_core"/>
</dbReference>
<dbReference type="InterPro" id="IPR001025">
    <property type="entry name" value="BAH_dom"/>
</dbReference>
<dbReference type="InterPro" id="IPR043151">
    <property type="entry name" value="BAH_sf"/>
</dbReference>
<dbReference type="InterPro" id="IPR050311">
    <property type="entry name" value="ORC1/CDC6"/>
</dbReference>
<dbReference type="InterPro" id="IPR048867">
    <property type="entry name" value="ORC1_wHTH"/>
</dbReference>
<dbReference type="InterPro" id="IPR027417">
    <property type="entry name" value="P-loop_NTPase"/>
</dbReference>
<dbReference type="PANTHER" id="PTHR10763">
    <property type="entry name" value="CELL DIVISION CONTROL PROTEIN 6-RELATED"/>
    <property type="match status" value="1"/>
</dbReference>
<dbReference type="PANTHER" id="PTHR10763:SF23">
    <property type="entry name" value="ORIGIN RECOGNITION COMPLEX SUBUNIT 1"/>
    <property type="match status" value="1"/>
</dbReference>
<dbReference type="Pfam" id="PF00004">
    <property type="entry name" value="AAA"/>
    <property type="match status" value="1"/>
</dbReference>
<dbReference type="Pfam" id="PF17872">
    <property type="entry name" value="AAA_lid_10"/>
    <property type="match status" value="1"/>
</dbReference>
<dbReference type="Pfam" id="PF21312">
    <property type="entry name" value="ORC1_wHTH"/>
    <property type="match status" value="1"/>
</dbReference>
<dbReference type="SMART" id="SM00382">
    <property type="entry name" value="AAA"/>
    <property type="match status" value="1"/>
</dbReference>
<dbReference type="SMART" id="SM00439">
    <property type="entry name" value="BAH"/>
    <property type="match status" value="1"/>
</dbReference>
<dbReference type="SUPFAM" id="SSF82061">
    <property type="entry name" value="BAH domain"/>
    <property type="match status" value="1"/>
</dbReference>
<dbReference type="SUPFAM" id="SSF52540">
    <property type="entry name" value="P-loop containing nucleoside triphosphate hydrolases"/>
    <property type="match status" value="1"/>
</dbReference>
<dbReference type="PROSITE" id="PS51038">
    <property type="entry name" value="BAH"/>
    <property type="match status" value="1"/>
</dbReference>
<organism>
    <name type="scientific">Kluyveromyces lactis (strain ATCC 8585 / CBS 2359 / DSM 70799 / NBRC 1267 / NRRL Y-1140 / WM37)</name>
    <name type="common">Yeast</name>
    <name type="synonym">Candida sphaerica</name>
    <dbReference type="NCBI Taxonomy" id="284590"/>
    <lineage>
        <taxon>Eukaryota</taxon>
        <taxon>Fungi</taxon>
        <taxon>Dikarya</taxon>
        <taxon>Ascomycota</taxon>
        <taxon>Saccharomycotina</taxon>
        <taxon>Saccharomycetes</taxon>
        <taxon>Saccharomycetales</taxon>
        <taxon>Saccharomycetaceae</taxon>
        <taxon>Kluyveromyces</taxon>
    </lineage>
</organism>
<protein>
    <recommendedName>
        <fullName>Origin recognition complex subunit 1</fullName>
    </recommendedName>
</protein>
<gene>
    <name type="primary">ORC1</name>
    <name type="ordered locus">KLLA0B05016g</name>
</gene>